<dbReference type="EC" id="2.7.4.25" evidence="1"/>
<dbReference type="EMBL" id="AM260525">
    <property type="protein sequence ID" value="CAK00580.1"/>
    <property type="molecule type" value="Genomic_DNA"/>
</dbReference>
<dbReference type="RefSeq" id="WP_012230404.1">
    <property type="nucleotide sequence ID" value="NC_010161.1"/>
</dbReference>
<dbReference type="SMR" id="A9ILM1"/>
<dbReference type="KEGG" id="btr:BT_0085"/>
<dbReference type="eggNOG" id="COG0283">
    <property type="taxonomic scope" value="Bacteria"/>
</dbReference>
<dbReference type="HOGENOM" id="CLU_079959_2_0_5"/>
<dbReference type="Proteomes" id="UP000001592">
    <property type="component" value="Chromosome"/>
</dbReference>
<dbReference type="GO" id="GO:0005737">
    <property type="term" value="C:cytoplasm"/>
    <property type="evidence" value="ECO:0007669"/>
    <property type="project" value="UniProtKB-SubCell"/>
</dbReference>
<dbReference type="GO" id="GO:0005524">
    <property type="term" value="F:ATP binding"/>
    <property type="evidence" value="ECO:0007669"/>
    <property type="project" value="UniProtKB-UniRule"/>
</dbReference>
<dbReference type="GO" id="GO:0036430">
    <property type="term" value="F:CMP kinase activity"/>
    <property type="evidence" value="ECO:0007669"/>
    <property type="project" value="RHEA"/>
</dbReference>
<dbReference type="GO" id="GO:0036431">
    <property type="term" value="F:dCMP kinase activity"/>
    <property type="evidence" value="ECO:0007669"/>
    <property type="project" value="RHEA"/>
</dbReference>
<dbReference type="GO" id="GO:0006220">
    <property type="term" value="P:pyrimidine nucleotide metabolic process"/>
    <property type="evidence" value="ECO:0007669"/>
    <property type="project" value="UniProtKB-UniRule"/>
</dbReference>
<dbReference type="CDD" id="cd02020">
    <property type="entry name" value="CMPK"/>
    <property type="match status" value="1"/>
</dbReference>
<dbReference type="Gene3D" id="3.40.50.300">
    <property type="entry name" value="P-loop containing nucleotide triphosphate hydrolases"/>
    <property type="match status" value="1"/>
</dbReference>
<dbReference type="HAMAP" id="MF_00238">
    <property type="entry name" value="Cytidyl_kinase_type1"/>
    <property type="match status" value="1"/>
</dbReference>
<dbReference type="InterPro" id="IPR003136">
    <property type="entry name" value="Cytidylate_kin"/>
</dbReference>
<dbReference type="InterPro" id="IPR011994">
    <property type="entry name" value="Cytidylate_kinase_dom"/>
</dbReference>
<dbReference type="InterPro" id="IPR027417">
    <property type="entry name" value="P-loop_NTPase"/>
</dbReference>
<dbReference type="NCBIfam" id="TIGR00017">
    <property type="entry name" value="cmk"/>
    <property type="match status" value="1"/>
</dbReference>
<dbReference type="Pfam" id="PF02224">
    <property type="entry name" value="Cytidylate_kin"/>
    <property type="match status" value="1"/>
</dbReference>
<dbReference type="SUPFAM" id="SSF52540">
    <property type="entry name" value="P-loop containing nucleoside triphosphate hydrolases"/>
    <property type="match status" value="1"/>
</dbReference>
<comment type="catalytic activity">
    <reaction evidence="1">
        <text>CMP + ATP = CDP + ADP</text>
        <dbReference type="Rhea" id="RHEA:11600"/>
        <dbReference type="ChEBI" id="CHEBI:30616"/>
        <dbReference type="ChEBI" id="CHEBI:58069"/>
        <dbReference type="ChEBI" id="CHEBI:60377"/>
        <dbReference type="ChEBI" id="CHEBI:456216"/>
        <dbReference type="EC" id="2.7.4.25"/>
    </reaction>
</comment>
<comment type="catalytic activity">
    <reaction evidence="1">
        <text>dCMP + ATP = dCDP + ADP</text>
        <dbReference type="Rhea" id="RHEA:25094"/>
        <dbReference type="ChEBI" id="CHEBI:30616"/>
        <dbReference type="ChEBI" id="CHEBI:57566"/>
        <dbReference type="ChEBI" id="CHEBI:58593"/>
        <dbReference type="ChEBI" id="CHEBI:456216"/>
        <dbReference type="EC" id="2.7.4.25"/>
    </reaction>
</comment>
<comment type="subcellular location">
    <subcellularLocation>
        <location evidence="1">Cytoplasm</location>
    </subcellularLocation>
</comment>
<comment type="similarity">
    <text evidence="1">Belongs to the cytidylate kinase family. Type 1 subfamily.</text>
</comment>
<evidence type="ECO:0000255" key="1">
    <source>
        <dbReference type="HAMAP-Rule" id="MF_00238"/>
    </source>
</evidence>
<name>KCY_BART1</name>
<feature type="chain" id="PRO_1000078331" description="Cytidylate kinase">
    <location>
        <begin position="1"/>
        <end position="215"/>
    </location>
</feature>
<feature type="binding site" evidence="1">
    <location>
        <begin position="10"/>
        <end position="18"/>
    </location>
    <ligand>
        <name>ATP</name>
        <dbReference type="ChEBI" id="CHEBI:30616"/>
    </ligand>
</feature>
<organism>
    <name type="scientific">Bartonella tribocorum (strain CIP 105476 / IBS 506)</name>
    <dbReference type="NCBI Taxonomy" id="382640"/>
    <lineage>
        <taxon>Bacteria</taxon>
        <taxon>Pseudomonadati</taxon>
        <taxon>Pseudomonadota</taxon>
        <taxon>Alphaproteobacteria</taxon>
        <taxon>Hyphomicrobiales</taxon>
        <taxon>Bartonellaceae</taxon>
        <taxon>Bartonella</taxon>
    </lineage>
</organism>
<sequence length="215" mass="23855">MKPFVIAIDGPAASGKGTLARKIAAHYHLHHLDTGLTYRGVAYALLQHNLALDDEKNAITYAKELDFNTLNLAFLSSHELGEAASKIALNPTIRKILVEKQRNFAKTLPGSVLDGRDIGTIVCPDADIKFYILANVQTRAKRRYQEILKKGGQANYHEILNDLEQRDSRDITRKESPLKPAENAHLLDTSELSIEATFAIACSFIDPIIKMHIIG</sequence>
<gene>
    <name evidence="1" type="primary">cmk</name>
    <name type="ordered locus">BT_0085</name>
</gene>
<reference key="1">
    <citation type="journal article" date="2007" name="Nat. Genet.">
        <title>Genomic analysis of Bartonella identifies type IV secretion systems as host adaptability factors.</title>
        <authorList>
            <person name="Saenz H.L."/>
            <person name="Engel P."/>
            <person name="Stoeckli M.C."/>
            <person name="Lanz C."/>
            <person name="Raddatz G."/>
            <person name="Vayssier-Taussat M."/>
            <person name="Birtles R."/>
            <person name="Schuster S.C."/>
            <person name="Dehio C."/>
        </authorList>
    </citation>
    <scope>NUCLEOTIDE SEQUENCE [LARGE SCALE GENOMIC DNA]</scope>
    <source>
        <strain>CIP 105476 / IBS 506</strain>
    </source>
</reference>
<protein>
    <recommendedName>
        <fullName evidence="1">Cytidylate kinase</fullName>
        <shortName evidence="1">CK</shortName>
        <ecNumber evidence="1">2.7.4.25</ecNumber>
    </recommendedName>
    <alternativeName>
        <fullName evidence="1">Cytidine monophosphate kinase</fullName>
        <shortName evidence="1">CMP kinase</shortName>
    </alternativeName>
</protein>
<proteinExistence type="inferred from homology"/>
<keyword id="KW-0067">ATP-binding</keyword>
<keyword id="KW-0963">Cytoplasm</keyword>
<keyword id="KW-0418">Kinase</keyword>
<keyword id="KW-0547">Nucleotide-binding</keyword>
<keyword id="KW-0808">Transferase</keyword>
<accession>A9ILM1</accession>